<proteinExistence type="inferred from homology"/>
<organism>
    <name type="scientific">Oryza nivara</name>
    <name type="common">Indian wild rice</name>
    <name type="synonym">Oryza sativa f. spontanea</name>
    <dbReference type="NCBI Taxonomy" id="4536"/>
    <lineage>
        <taxon>Eukaryota</taxon>
        <taxon>Viridiplantae</taxon>
        <taxon>Streptophyta</taxon>
        <taxon>Embryophyta</taxon>
        <taxon>Tracheophyta</taxon>
        <taxon>Spermatophyta</taxon>
        <taxon>Magnoliopsida</taxon>
        <taxon>Liliopsida</taxon>
        <taxon>Poales</taxon>
        <taxon>Poaceae</taxon>
        <taxon>BOP clade</taxon>
        <taxon>Oryzoideae</taxon>
        <taxon>Oryzeae</taxon>
        <taxon>Oryzinae</taxon>
        <taxon>Oryza</taxon>
    </lineage>
</organism>
<dbReference type="EC" id="4.1.1.39" evidence="1"/>
<dbReference type="EMBL" id="AP006728">
    <property type="protein sequence ID" value="BAD26786.1"/>
    <property type="molecule type" value="Genomic_DNA"/>
</dbReference>
<dbReference type="RefSeq" id="YP_052757.1">
    <property type="nucleotide sequence ID" value="NC_005973.1"/>
</dbReference>
<dbReference type="SMR" id="Q6ENG6"/>
<dbReference type="STRING" id="4536.Q6ENG6"/>
<dbReference type="GeneID" id="2885957"/>
<dbReference type="Proteomes" id="UP000006591">
    <property type="component" value="Chloroplast"/>
</dbReference>
<dbReference type="GO" id="GO:0009507">
    <property type="term" value="C:chloroplast"/>
    <property type="evidence" value="ECO:0007669"/>
    <property type="project" value="UniProtKB-SubCell"/>
</dbReference>
<dbReference type="GO" id="GO:0009536">
    <property type="term" value="C:plastid"/>
    <property type="evidence" value="ECO:0000305"/>
    <property type="project" value="Gramene"/>
</dbReference>
<dbReference type="GO" id="GO:0000287">
    <property type="term" value="F:magnesium ion binding"/>
    <property type="evidence" value="ECO:0007669"/>
    <property type="project" value="UniProtKB-UniRule"/>
</dbReference>
<dbReference type="GO" id="GO:0004497">
    <property type="term" value="F:monooxygenase activity"/>
    <property type="evidence" value="ECO:0007669"/>
    <property type="project" value="UniProtKB-KW"/>
</dbReference>
<dbReference type="GO" id="GO:0016984">
    <property type="term" value="F:ribulose-bisphosphate carboxylase activity"/>
    <property type="evidence" value="ECO:0007669"/>
    <property type="project" value="UniProtKB-UniRule"/>
</dbReference>
<dbReference type="GO" id="GO:0009853">
    <property type="term" value="P:photorespiration"/>
    <property type="evidence" value="ECO:0007669"/>
    <property type="project" value="UniProtKB-KW"/>
</dbReference>
<dbReference type="GO" id="GO:0019253">
    <property type="term" value="P:reductive pentose-phosphate cycle"/>
    <property type="evidence" value="ECO:0007669"/>
    <property type="project" value="UniProtKB-UniRule"/>
</dbReference>
<dbReference type="CDD" id="cd08212">
    <property type="entry name" value="RuBisCO_large_I"/>
    <property type="match status" value="1"/>
</dbReference>
<dbReference type="FunFam" id="3.20.20.110:FF:000001">
    <property type="entry name" value="Ribulose bisphosphate carboxylase large chain"/>
    <property type="match status" value="1"/>
</dbReference>
<dbReference type="FunFam" id="3.30.70.150:FF:000001">
    <property type="entry name" value="Ribulose bisphosphate carboxylase large chain"/>
    <property type="match status" value="1"/>
</dbReference>
<dbReference type="Gene3D" id="3.20.20.110">
    <property type="entry name" value="Ribulose bisphosphate carboxylase, large subunit, C-terminal domain"/>
    <property type="match status" value="1"/>
</dbReference>
<dbReference type="Gene3D" id="3.30.70.150">
    <property type="entry name" value="RuBisCO large subunit, N-terminal domain"/>
    <property type="match status" value="1"/>
</dbReference>
<dbReference type="HAMAP" id="MF_01338">
    <property type="entry name" value="RuBisCO_L_type1"/>
    <property type="match status" value="1"/>
</dbReference>
<dbReference type="InterPro" id="IPR033966">
    <property type="entry name" value="RuBisCO"/>
</dbReference>
<dbReference type="InterPro" id="IPR020878">
    <property type="entry name" value="RuBisCo_large_chain_AS"/>
</dbReference>
<dbReference type="InterPro" id="IPR000685">
    <property type="entry name" value="RuBisCO_lsu_C"/>
</dbReference>
<dbReference type="InterPro" id="IPR036376">
    <property type="entry name" value="RuBisCO_lsu_C_sf"/>
</dbReference>
<dbReference type="InterPro" id="IPR017443">
    <property type="entry name" value="RuBisCO_lsu_fd_N"/>
</dbReference>
<dbReference type="InterPro" id="IPR036422">
    <property type="entry name" value="RuBisCO_lsu_N_sf"/>
</dbReference>
<dbReference type="InterPro" id="IPR020888">
    <property type="entry name" value="RuBisCO_lsuI"/>
</dbReference>
<dbReference type="NCBIfam" id="NF003252">
    <property type="entry name" value="PRK04208.1"/>
    <property type="match status" value="1"/>
</dbReference>
<dbReference type="PANTHER" id="PTHR42704">
    <property type="entry name" value="RIBULOSE BISPHOSPHATE CARBOXYLASE"/>
    <property type="match status" value="1"/>
</dbReference>
<dbReference type="PANTHER" id="PTHR42704:SF20">
    <property type="entry name" value="RIBULOSE BISPHOSPHATE CARBOXYLASE LARGE CHAIN"/>
    <property type="match status" value="1"/>
</dbReference>
<dbReference type="Pfam" id="PF00016">
    <property type="entry name" value="RuBisCO_large"/>
    <property type="match status" value="1"/>
</dbReference>
<dbReference type="Pfam" id="PF02788">
    <property type="entry name" value="RuBisCO_large_N"/>
    <property type="match status" value="1"/>
</dbReference>
<dbReference type="SFLD" id="SFLDG01052">
    <property type="entry name" value="RuBisCO"/>
    <property type="match status" value="1"/>
</dbReference>
<dbReference type="SFLD" id="SFLDS00014">
    <property type="entry name" value="RuBisCO"/>
    <property type="match status" value="1"/>
</dbReference>
<dbReference type="SFLD" id="SFLDG00301">
    <property type="entry name" value="RuBisCO-like_proteins"/>
    <property type="match status" value="1"/>
</dbReference>
<dbReference type="SUPFAM" id="SSF51649">
    <property type="entry name" value="RuBisCo, C-terminal domain"/>
    <property type="match status" value="1"/>
</dbReference>
<dbReference type="SUPFAM" id="SSF54966">
    <property type="entry name" value="RuBisCO, large subunit, small (N-terminal) domain"/>
    <property type="match status" value="1"/>
</dbReference>
<dbReference type="PROSITE" id="PS00157">
    <property type="entry name" value="RUBISCO_LARGE"/>
    <property type="match status" value="1"/>
</dbReference>
<protein>
    <recommendedName>
        <fullName evidence="1">Ribulose bisphosphate carboxylase large chain</fullName>
        <shortName evidence="1">RuBisCO large subunit</shortName>
        <ecNumber evidence="1">4.1.1.39</ecNumber>
    </recommendedName>
</protein>
<sequence length="477" mass="52881">MSPQTETKASVGFKAGVKDYKLTYYTPEYETKDTDILAAFRVTPQPGVPPEEAGAAVAAESSTGTWTTVWTDGLTSLDRYKGRCYHIEPVVGEDNQYIAYVAYPLDLFEEGSVTNMFTSIVGNVFGFKALRALRLEDLRIPPTYSKTFQGPPHGIQVERDKLNKYGRPLLGCTIKPKLGLSAKNYGRACYECLRGGLDFTKDDENVNSQPFMRWRDRFVFCAEAIYKSQAETGEIKGHYLNATAGTCEEMIKRAVFARELGVPIVMHDYLTGGFTANTSLAHYCRDNGLLLHIHRAMHAVIDRQKNHGMHFRVLAKALRMSGGDHIHAGTVVGKLEGEREMTLGFVDLLRDDFIEKDRARGIFFTQDWVSMPGVIPVASGGIHVWHMPALTEIFGDDSVLQFGGGTLGHPWGNAPGAAANRVALEACVQARNEGRDLAREGNEIIRSACKWSPELAAACEIWKAIKFEFEPVDKLDS</sequence>
<reference key="1">
    <citation type="journal article" date="2004" name="Gene">
        <title>The complete nucleotide sequence of wild rice (Oryza nivara) chloroplast genome: first genome wide comparative sequence analysis of wild and cultivated rice.</title>
        <authorList>
            <person name="Masood M.S."/>
            <person name="Nishikawa T."/>
            <person name="Fukuoka S."/>
            <person name="Njenga P.K."/>
            <person name="Tsudzuki T."/>
            <person name="Kadowaki K."/>
        </authorList>
    </citation>
    <scope>NUCLEOTIDE SEQUENCE [LARGE SCALE GENOMIC DNA]</scope>
    <source>
        <strain evidence="2">cv. SL10</strain>
    </source>
</reference>
<geneLocation type="chloroplast"/>
<comment type="function">
    <text evidence="1">RuBisCO catalyzes two reactions: the carboxylation of D-ribulose 1,5-bisphosphate, the primary event in carbon dioxide fixation, as well as the oxidative fragmentation of the pentose substrate in the photorespiration process. Both reactions occur simultaneously and in competition at the same active site.</text>
</comment>
<comment type="catalytic activity">
    <reaction evidence="1">
        <text>2 (2R)-3-phosphoglycerate + 2 H(+) = D-ribulose 1,5-bisphosphate + CO2 + H2O</text>
        <dbReference type="Rhea" id="RHEA:23124"/>
        <dbReference type="ChEBI" id="CHEBI:15377"/>
        <dbReference type="ChEBI" id="CHEBI:15378"/>
        <dbReference type="ChEBI" id="CHEBI:16526"/>
        <dbReference type="ChEBI" id="CHEBI:57870"/>
        <dbReference type="ChEBI" id="CHEBI:58272"/>
        <dbReference type="EC" id="4.1.1.39"/>
    </reaction>
</comment>
<comment type="catalytic activity">
    <reaction evidence="1">
        <text>D-ribulose 1,5-bisphosphate + O2 = 2-phosphoglycolate + (2R)-3-phosphoglycerate + 2 H(+)</text>
        <dbReference type="Rhea" id="RHEA:36631"/>
        <dbReference type="ChEBI" id="CHEBI:15378"/>
        <dbReference type="ChEBI" id="CHEBI:15379"/>
        <dbReference type="ChEBI" id="CHEBI:57870"/>
        <dbReference type="ChEBI" id="CHEBI:58033"/>
        <dbReference type="ChEBI" id="CHEBI:58272"/>
    </reaction>
</comment>
<comment type="cofactor">
    <cofactor evidence="1">
        <name>Mg(2+)</name>
        <dbReference type="ChEBI" id="CHEBI:18420"/>
    </cofactor>
    <text evidence="1">Binds 1 Mg(2+) ion per subunit.</text>
</comment>
<comment type="subunit">
    <text evidence="1">Heterohexadecamer of 8 large chains and 8 small chains; disulfide-linked. The disulfide link is formed within the large subunit homodimers.</text>
</comment>
<comment type="subcellular location">
    <subcellularLocation>
        <location>Plastid</location>
        <location>Chloroplast</location>
    </subcellularLocation>
</comment>
<comment type="PTM">
    <text evidence="1">The disulfide bond which can form in the large chain dimeric partners within the hexadecamer appears to be associated with oxidative stress and protein turnover.</text>
</comment>
<comment type="miscellaneous">
    <text evidence="1">The basic functional RuBisCO is composed of a large chain homodimer in a 'head-to-tail' conformation. In form I RuBisCO this homodimer is arranged in a barrel-like tetramer with the small subunits forming a tetrameric 'cap' on each end of the 'barrel'.</text>
</comment>
<comment type="similarity">
    <text evidence="1">Belongs to the RuBisCO large chain family. Type I subfamily.</text>
</comment>
<gene>
    <name evidence="1" type="primary">rbcL</name>
</gene>
<evidence type="ECO:0000255" key="1">
    <source>
        <dbReference type="HAMAP-Rule" id="MF_01338"/>
    </source>
</evidence>
<evidence type="ECO:0000312" key="2">
    <source>
        <dbReference type="Proteomes" id="UP000006591"/>
    </source>
</evidence>
<keyword id="KW-0007">Acetylation</keyword>
<keyword id="KW-0113">Calvin cycle</keyword>
<keyword id="KW-0120">Carbon dioxide fixation</keyword>
<keyword id="KW-0150">Chloroplast</keyword>
<keyword id="KW-1015">Disulfide bond</keyword>
<keyword id="KW-0456">Lyase</keyword>
<keyword id="KW-0460">Magnesium</keyword>
<keyword id="KW-0479">Metal-binding</keyword>
<keyword id="KW-0488">Methylation</keyword>
<keyword id="KW-0503">Monooxygenase</keyword>
<keyword id="KW-0560">Oxidoreductase</keyword>
<keyword id="KW-0601">Photorespiration</keyword>
<keyword id="KW-0602">Photosynthesis</keyword>
<keyword id="KW-0934">Plastid</keyword>
<keyword id="KW-1185">Reference proteome</keyword>
<accession>Q6ENG6</accession>
<feature type="propeptide" id="PRO_0000031327" evidence="1">
    <location>
        <begin position="1"/>
        <end position="2"/>
    </location>
</feature>
<feature type="chain" id="PRO_0000031328" description="Ribulose bisphosphate carboxylase large chain">
    <location>
        <begin position="3"/>
        <end position="477"/>
    </location>
</feature>
<feature type="active site" description="Proton acceptor" evidence="1">
    <location>
        <position position="175"/>
    </location>
</feature>
<feature type="active site" description="Proton acceptor" evidence="1">
    <location>
        <position position="294"/>
    </location>
</feature>
<feature type="binding site" description="in homodimeric partner" evidence="1">
    <location>
        <position position="123"/>
    </location>
    <ligand>
        <name>substrate</name>
    </ligand>
</feature>
<feature type="binding site" evidence="1">
    <location>
        <position position="173"/>
    </location>
    <ligand>
        <name>substrate</name>
    </ligand>
</feature>
<feature type="binding site" evidence="1">
    <location>
        <position position="177"/>
    </location>
    <ligand>
        <name>substrate</name>
    </ligand>
</feature>
<feature type="binding site" description="via carbamate group" evidence="1">
    <location>
        <position position="201"/>
    </location>
    <ligand>
        <name>Mg(2+)</name>
        <dbReference type="ChEBI" id="CHEBI:18420"/>
    </ligand>
</feature>
<feature type="binding site" evidence="1">
    <location>
        <position position="203"/>
    </location>
    <ligand>
        <name>Mg(2+)</name>
        <dbReference type="ChEBI" id="CHEBI:18420"/>
    </ligand>
</feature>
<feature type="binding site" evidence="1">
    <location>
        <position position="204"/>
    </location>
    <ligand>
        <name>Mg(2+)</name>
        <dbReference type="ChEBI" id="CHEBI:18420"/>
    </ligand>
</feature>
<feature type="binding site" evidence="1">
    <location>
        <position position="295"/>
    </location>
    <ligand>
        <name>substrate</name>
    </ligand>
</feature>
<feature type="binding site" evidence="1">
    <location>
        <position position="327"/>
    </location>
    <ligand>
        <name>substrate</name>
    </ligand>
</feature>
<feature type="binding site" evidence="1">
    <location>
        <position position="379"/>
    </location>
    <ligand>
        <name>substrate</name>
    </ligand>
</feature>
<feature type="site" description="Transition state stabilizer" evidence="1">
    <location>
        <position position="334"/>
    </location>
</feature>
<feature type="modified residue" description="N-acetylproline" evidence="1">
    <location>
        <position position="3"/>
    </location>
</feature>
<feature type="modified residue" description="N6,N6,N6-trimethyllysine" evidence="1">
    <location>
        <position position="14"/>
    </location>
</feature>
<feature type="modified residue" description="N6-carboxylysine" evidence="1">
    <location>
        <position position="201"/>
    </location>
</feature>
<feature type="disulfide bond" description="Interchain; in linked form" evidence="1">
    <location>
        <position position="247"/>
    </location>
</feature>
<name>RBL_ORYNI</name>